<protein>
    <recommendedName>
        <fullName evidence="1">tRNA-2-methylthio-N(6)-dimethylallyladenosine synthase</fullName>
        <ecNumber evidence="1">2.8.4.3</ecNumber>
    </recommendedName>
    <alternativeName>
        <fullName evidence="1">(Dimethylallyl)adenosine tRNA methylthiotransferase MiaB</fullName>
    </alternativeName>
    <alternativeName>
        <fullName evidence="1">tRNA-i(6)A37 methylthiotransferase</fullName>
    </alternativeName>
</protein>
<feature type="chain" id="PRO_0000374409" description="tRNA-2-methylthio-N(6)-dimethylallyladenosine synthase">
    <location>
        <begin position="1"/>
        <end position="477"/>
    </location>
</feature>
<feature type="domain" description="MTTase N-terminal" evidence="1">
    <location>
        <begin position="9"/>
        <end position="129"/>
    </location>
</feature>
<feature type="domain" description="Radical SAM core" evidence="2">
    <location>
        <begin position="156"/>
        <end position="386"/>
    </location>
</feature>
<feature type="domain" description="TRAM" evidence="1">
    <location>
        <begin position="391"/>
        <end position="453"/>
    </location>
</feature>
<feature type="region of interest" description="Disordered" evidence="3">
    <location>
        <begin position="454"/>
        <end position="477"/>
    </location>
</feature>
<feature type="compositionally biased region" description="Low complexity" evidence="3">
    <location>
        <begin position="464"/>
        <end position="477"/>
    </location>
</feature>
<feature type="binding site" evidence="1">
    <location>
        <position position="18"/>
    </location>
    <ligand>
        <name>[4Fe-4S] cluster</name>
        <dbReference type="ChEBI" id="CHEBI:49883"/>
        <label>1</label>
    </ligand>
</feature>
<feature type="binding site" evidence="1">
    <location>
        <position position="54"/>
    </location>
    <ligand>
        <name>[4Fe-4S] cluster</name>
        <dbReference type="ChEBI" id="CHEBI:49883"/>
        <label>1</label>
    </ligand>
</feature>
<feature type="binding site" evidence="1">
    <location>
        <position position="92"/>
    </location>
    <ligand>
        <name>[4Fe-4S] cluster</name>
        <dbReference type="ChEBI" id="CHEBI:49883"/>
        <label>1</label>
    </ligand>
</feature>
<feature type="binding site" evidence="1">
    <location>
        <position position="170"/>
    </location>
    <ligand>
        <name>[4Fe-4S] cluster</name>
        <dbReference type="ChEBI" id="CHEBI:49883"/>
        <label>2</label>
        <note>4Fe-4S-S-AdoMet</note>
    </ligand>
</feature>
<feature type="binding site" evidence="1">
    <location>
        <position position="174"/>
    </location>
    <ligand>
        <name>[4Fe-4S] cluster</name>
        <dbReference type="ChEBI" id="CHEBI:49883"/>
        <label>2</label>
        <note>4Fe-4S-S-AdoMet</note>
    </ligand>
</feature>
<feature type="binding site" evidence="1">
    <location>
        <position position="177"/>
    </location>
    <ligand>
        <name>[4Fe-4S] cluster</name>
        <dbReference type="ChEBI" id="CHEBI:49883"/>
        <label>2</label>
        <note>4Fe-4S-S-AdoMet</note>
    </ligand>
</feature>
<keyword id="KW-0004">4Fe-4S</keyword>
<keyword id="KW-0963">Cytoplasm</keyword>
<keyword id="KW-0408">Iron</keyword>
<keyword id="KW-0411">Iron-sulfur</keyword>
<keyword id="KW-0479">Metal-binding</keyword>
<keyword id="KW-1185">Reference proteome</keyword>
<keyword id="KW-0949">S-adenosyl-L-methionine</keyword>
<keyword id="KW-0808">Transferase</keyword>
<keyword id="KW-0819">tRNA processing</keyword>
<organism>
    <name type="scientific">Nitrobacter winogradskyi (strain ATCC 25391 / DSM 10237 / CIP 104748 / NCIMB 11846 / Nb-255)</name>
    <dbReference type="NCBI Taxonomy" id="323098"/>
    <lineage>
        <taxon>Bacteria</taxon>
        <taxon>Pseudomonadati</taxon>
        <taxon>Pseudomonadota</taxon>
        <taxon>Alphaproteobacteria</taxon>
        <taxon>Hyphomicrobiales</taxon>
        <taxon>Nitrobacteraceae</taxon>
        <taxon>Nitrobacter</taxon>
    </lineage>
</organism>
<name>MIAB_NITWN</name>
<dbReference type="EC" id="2.8.4.3" evidence="1"/>
<dbReference type="EMBL" id="CP000115">
    <property type="protein sequence ID" value="ABA03282.1"/>
    <property type="molecule type" value="Genomic_DNA"/>
</dbReference>
<dbReference type="RefSeq" id="WP_011313353.1">
    <property type="nucleotide sequence ID" value="NC_007406.1"/>
</dbReference>
<dbReference type="SMR" id="Q3SMT7"/>
<dbReference type="STRING" id="323098.Nwi_0014"/>
<dbReference type="KEGG" id="nwi:Nwi_0014"/>
<dbReference type="eggNOG" id="COG0621">
    <property type="taxonomic scope" value="Bacteria"/>
</dbReference>
<dbReference type="HOGENOM" id="CLU_018697_2_0_5"/>
<dbReference type="Proteomes" id="UP000002531">
    <property type="component" value="Chromosome"/>
</dbReference>
<dbReference type="GO" id="GO:0005829">
    <property type="term" value="C:cytosol"/>
    <property type="evidence" value="ECO:0007669"/>
    <property type="project" value="TreeGrafter"/>
</dbReference>
<dbReference type="GO" id="GO:0051539">
    <property type="term" value="F:4 iron, 4 sulfur cluster binding"/>
    <property type="evidence" value="ECO:0007669"/>
    <property type="project" value="UniProtKB-UniRule"/>
</dbReference>
<dbReference type="GO" id="GO:0046872">
    <property type="term" value="F:metal ion binding"/>
    <property type="evidence" value="ECO:0007669"/>
    <property type="project" value="UniProtKB-KW"/>
</dbReference>
<dbReference type="GO" id="GO:0035597">
    <property type="term" value="F:N6-isopentenyladenosine methylthiotransferase activity"/>
    <property type="evidence" value="ECO:0007669"/>
    <property type="project" value="TreeGrafter"/>
</dbReference>
<dbReference type="CDD" id="cd01335">
    <property type="entry name" value="Radical_SAM"/>
    <property type="match status" value="1"/>
</dbReference>
<dbReference type="FunFam" id="3.40.50.12160:FF:000003">
    <property type="entry name" value="CDK5 regulatory subunit-associated protein 1"/>
    <property type="match status" value="1"/>
</dbReference>
<dbReference type="FunFam" id="3.80.30.20:FF:000001">
    <property type="entry name" value="tRNA-2-methylthio-N(6)-dimethylallyladenosine synthase 2"/>
    <property type="match status" value="1"/>
</dbReference>
<dbReference type="Gene3D" id="3.40.50.12160">
    <property type="entry name" value="Methylthiotransferase, N-terminal domain"/>
    <property type="match status" value="1"/>
</dbReference>
<dbReference type="Gene3D" id="3.80.30.20">
    <property type="entry name" value="tm_1862 like domain"/>
    <property type="match status" value="1"/>
</dbReference>
<dbReference type="HAMAP" id="MF_01864">
    <property type="entry name" value="tRNA_metthiotr_MiaB"/>
    <property type="match status" value="1"/>
</dbReference>
<dbReference type="InterPro" id="IPR006638">
    <property type="entry name" value="Elp3/MiaA/NifB-like_rSAM"/>
</dbReference>
<dbReference type="InterPro" id="IPR005839">
    <property type="entry name" value="Methylthiotransferase"/>
</dbReference>
<dbReference type="InterPro" id="IPR020612">
    <property type="entry name" value="Methylthiotransferase_CS"/>
</dbReference>
<dbReference type="InterPro" id="IPR013848">
    <property type="entry name" value="Methylthiotransferase_N"/>
</dbReference>
<dbReference type="InterPro" id="IPR038135">
    <property type="entry name" value="Methylthiotransferase_N_sf"/>
</dbReference>
<dbReference type="InterPro" id="IPR006463">
    <property type="entry name" value="MiaB_methiolase"/>
</dbReference>
<dbReference type="InterPro" id="IPR007197">
    <property type="entry name" value="rSAM"/>
</dbReference>
<dbReference type="InterPro" id="IPR023404">
    <property type="entry name" value="rSAM_horseshoe"/>
</dbReference>
<dbReference type="InterPro" id="IPR002792">
    <property type="entry name" value="TRAM_dom"/>
</dbReference>
<dbReference type="NCBIfam" id="TIGR01574">
    <property type="entry name" value="miaB-methiolase"/>
    <property type="match status" value="1"/>
</dbReference>
<dbReference type="NCBIfam" id="TIGR00089">
    <property type="entry name" value="MiaB/RimO family radical SAM methylthiotransferase"/>
    <property type="match status" value="1"/>
</dbReference>
<dbReference type="PANTHER" id="PTHR43020">
    <property type="entry name" value="CDK5 REGULATORY SUBUNIT-ASSOCIATED PROTEIN 1"/>
    <property type="match status" value="1"/>
</dbReference>
<dbReference type="PANTHER" id="PTHR43020:SF2">
    <property type="entry name" value="MITOCHONDRIAL TRNA METHYLTHIOTRANSFERASE CDK5RAP1"/>
    <property type="match status" value="1"/>
</dbReference>
<dbReference type="Pfam" id="PF04055">
    <property type="entry name" value="Radical_SAM"/>
    <property type="match status" value="1"/>
</dbReference>
<dbReference type="Pfam" id="PF01938">
    <property type="entry name" value="TRAM"/>
    <property type="match status" value="1"/>
</dbReference>
<dbReference type="Pfam" id="PF00919">
    <property type="entry name" value="UPF0004"/>
    <property type="match status" value="1"/>
</dbReference>
<dbReference type="SFLD" id="SFLDF00273">
    <property type="entry name" value="(dimethylallyl)adenosine_tRNA"/>
    <property type="match status" value="1"/>
</dbReference>
<dbReference type="SFLD" id="SFLDG01082">
    <property type="entry name" value="B12-binding_domain_containing"/>
    <property type="match status" value="1"/>
</dbReference>
<dbReference type="SFLD" id="SFLDG01061">
    <property type="entry name" value="methylthiotransferase"/>
    <property type="match status" value="1"/>
</dbReference>
<dbReference type="SMART" id="SM00729">
    <property type="entry name" value="Elp3"/>
    <property type="match status" value="1"/>
</dbReference>
<dbReference type="SUPFAM" id="SSF102114">
    <property type="entry name" value="Radical SAM enzymes"/>
    <property type="match status" value="1"/>
</dbReference>
<dbReference type="PROSITE" id="PS51449">
    <property type="entry name" value="MTTASE_N"/>
    <property type="match status" value="1"/>
</dbReference>
<dbReference type="PROSITE" id="PS01278">
    <property type="entry name" value="MTTASE_RADICAL"/>
    <property type="match status" value="1"/>
</dbReference>
<dbReference type="PROSITE" id="PS51918">
    <property type="entry name" value="RADICAL_SAM"/>
    <property type="match status" value="1"/>
</dbReference>
<dbReference type="PROSITE" id="PS50926">
    <property type="entry name" value="TRAM"/>
    <property type="match status" value="1"/>
</dbReference>
<accession>Q3SMT7</accession>
<proteinExistence type="inferred from homology"/>
<reference key="1">
    <citation type="journal article" date="2006" name="Appl. Environ. Microbiol.">
        <title>Genome sequence of the chemolithoautotrophic nitrite-oxidizing bacterium Nitrobacter winogradskyi Nb-255.</title>
        <authorList>
            <person name="Starkenburg S.R."/>
            <person name="Chain P.S.G."/>
            <person name="Sayavedra-Soto L.A."/>
            <person name="Hauser L."/>
            <person name="Land M.L."/>
            <person name="Larimer F.W."/>
            <person name="Malfatti S.A."/>
            <person name="Klotz M.G."/>
            <person name="Bottomley P.J."/>
            <person name="Arp D.J."/>
            <person name="Hickey W.J."/>
        </authorList>
    </citation>
    <scope>NUCLEOTIDE SEQUENCE [LARGE SCALE GENOMIC DNA]</scope>
    <source>
        <strain>ATCC 25391 / DSM 10237 / CIP 104748 / NCIMB 11846 / Nb-255</strain>
    </source>
</reference>
<gene>
    <name evidence="1" type="primary">miaB</name>
    <name type="ordered locus">Nwi_0014</name>
</gene>
<comment type="function">
    <text evidence="1">Catalyzes the methylthiolation of N6-(dimethylallyl)adenosine (i(6)A), leading to the formation of 2-methylthio-N6-(dimethylallyl)adenosine (ms(2)i(6)A) at position 37 in tRNAs that read codons beginning with uridine.</text>
</comment>
<comment type="catalytic activity">
    <reaction evidence="1">
        <text>N(6)-dimethylallyladenosine(37) in tRNA + (sulfur carrier)-SH + AH2 + 2 S-adenosyl-L-methionine = 2-methylsulfanyl-N(6)-dimethylallyladenosine(37) in tRNA + (sulfur carrier)-H + 5'-deoxyadenosine + L-methionine + A + S-adenosyl-L-homocysteine + 2 H(+)</text>
        <dbReference type="Rhea" id="RHEA:37067"/>
        <dbReference type="Rhea" id="RHEA-COMP:10375"/>
        <dbReference type="Rhea" id="RHEA-COMP:10376"/>
        <dbReference type="Rhea" id="RHEA-COMP:14737"/>
        <dbReference type="Rhea" id="RHEA-COMP:14739"/>
        <dbReference type="ChEBI" id="CHEBI:13193"/>
        <dbReference type="ChEBI" id="CHEBI:15378"/>
        <dbReference type="ChEBI" id="CHEBI:17319"/>
        <dbReference type="ChEBI" id="CHEBI:17499"/>
        <dbReference type="ChEBI" id="CHEBI:29917"/>
        <dbReference type="ChEBI" id="CHEBI:57844"/>
        <dbReference type="ChEBI" id="CHEBI:57856"/>
        <dbReference type="ChEBI" id="CHEBI:59789"/>
        <dbReference type="ChEBI" id="CHEBI:64428"/>
        <dbReference type="ChEBI" id="CHEBI:74415"/>
        <dbReference type="ChEBI" id="CHEBI:74417"/>
        <dbReference type="EC" id="2.8.4.3"/>
    </reaction>
</comment>
<comment type="cofactor">
    <cofactor evidence="1">
        <name>[4Fe-4S] cluster</name>
        <dbReference type="ChEBI" id="CHEBI:49883"/>
    </cofactor>
    <text evidence="1">Binds 2 [4Fe-4S] clusters. One cluster is coordinated with 3 cysteines and an exchangeable S-adenosyl-L-methionine.</text>
</comment>
<comment type="subunit">
    <text evidence="1">Monomer.</text>
</comment>
<comment type="subcellular location">
    <subcellularLocation>
        <location evidence="1">Cytoplasm</location>
    </subcellularLocation>
</comment>
<comment type="similarity">
    <text evidence="1">Belongs to the methylthiotransferase family. MiaB subfamily.</text>
</comment>
<evidence type="ECO:0000255" key="1">
    <source>
        <dbReference type="HAMAP-Rule" id="MF_01864"/>
    </source>
</evidence>
<evidence type="ECO:0000255" key="2">
    <source>
        <dbReference type="PROSITE-ProRule" id="PRU01266"/>
    </source>
</evidence>
<evidence type="ECO:0000256" key="3">
    <source>
        <dbReference type="SAM" id="MobiDB-lite"/>
    </source>
</evidence>
<sequence>MPESRMPPRKLHIKSYGCQMNVYDAQRMADTLAVEGYVETTSAEDADLVILNTCHIREKASEKVYSELGRLRAAKDQAARDGRGMNIVVAGCVAQAEGEEIIRRAPMVDVVVGPQSYHHLPQLLARAKTCGRALETEFPVADKFGFLPQPSRQAIRSRGISAFVTVQEGCDKFCTFCVVPYTRGAEASRPVAKVVEDVRRLADNGVREITLIGQNVNAYHGEGPDGRPWPFGKLLYRLAGIPGIVRLRYSTSHPRDVEDTLIDAHRDLDALMPFVHLPVQSGSDRILAAMNRRHTADDYRRVIDRFRQARPDIAFSSDFIVGFPGETEEDFAATLALVGQIGYAAAYSFKYSPRPGTPAADMQETVSTADMDQRLVQLQNLIDSQQSAFNRTALGRTIDVLFDRAGRKPGQIVGRTAYLQPAHVEASDAIIGQVLPVTVASLERYSLFGTLASKPTSGEPSNHAATGGAQFQTTAGA</sequence>